<sequence length="729" mass="82296">MEEEGIRNFKELRAKFQKFNAAPLPGPMRFPAGVSRKHDRGSTQPAQDLANRKCLSSHHHQTPSHSSTGVSQPLKNQTLKSAQGDELQKTSSSSGTPEKSTVCPERDFQKAAVPLDVTKSRAKTSNEEKGMTLSSFRYKLWNWEKVSSQNGEMSPAPLLTNGGIKTFHFEGQKTMGLAQDKPEKSLKATGAQTLPPQSHSMAQRKSPVTSKASSVSLPPHSRKSTKSPATEGSHRSSQCQPVYECELDSLVPEKPQSRHCRLPKTKPLPSIETLGPPPPKPSKPPFVNLYAFHRLPATVTKTPKEETMKEGPLSPDSAELEEAHNYDTTISYLRHSGNSINLCAEGESTEATYEIEIEELQKPWRSFFLPELSPRPKEEENTMEEKESWESEPLEPRKELHPSRPPKVVVYKETPGKTQMAGVHEDRRSVPAGNQEAMTDIMQNRLFPEDVTLTRHSQDKSGYVEALEVTKETPSPSTIRSSSSSEKTYDAVECSREDVRKWDFSSSFTSDSEENCEEMYEDIYKAKNDDPKTEVAGRTALRKLQQIFRKENVVFRMKKTKSKEIVSNGFSVSLPDLGPRSQDDSQDGIIYDDVDTREKESNDEDKVKTWKTKFLIPKGKKWGKGSQGSKSFSPRHFFRTKKQKLEKNRMEKEEKLFRERFQYGKEILVINRAVACASNSRNGMFDLPIIPGEQLEVIDTTEQNLVICRNSKGKYGYVLVEHLDFKHQG</sequence>
<keyword id="KW-0472">Membrane</keyword>
<keyword id="KW-0597">Phosphoprotein</keyword>
<keyword id="KW-1185">Reference proteome</keyword>
<keyword id="KW-0728">SH3 domain</keyword>
<accession>A2A995</accession>
<evidence type="ECO:0000250" key="1">
    <source>
        <dbReference type="UniProtKB" id="Q5VWT5"/>
    </source>
</evidence>
<evidence type="ECO:0000255" key="2">
    <source>
        <dbReference type="PROSITE-ProRule" id="PRU00192"/>
    </source>
</evidence>
<evidence type="ECO:0000256" key="3">
    <source>
        <dbReference type="SAM" id="MobiDB-lite"/>
    </source>
</evidence>
<evidence type="ECO:0000305" key="4"/>
<evidence type="ECO:0000312" key="5">
    <source>
        <dbReference type="MGI" id="MGI:2685466"/>
    </source>
</evidence>
<proteinExistence type="evidence at protein level"/>
<name>FYB2_MOUSE</name>
<feature type="chain" id="PRO_0000304584" description="FYN-binding protein 2">
    <location>
        <begin position="1"/>
        <end position="729"/>
    </location>
</feature>
<feature type="domain" description="SH3" evidence="2">
    <location>
        <begin position="668"/>
        <end position="728"/>
    </location>
</feature>
<feature type="region of interest" description="Disordered" evidence="3">
    <location>
        <begin position="18"/>
        <end position="130"/>
    </location>
</feature>
<feature type="region of interest" description="Disordered" evidence="3">
    <location>
        <begin position="170"/>
        <end position="320"/>
    </location>
</feature>
<feature type="region of interest" description="Disordered" evidence="3">
    <location>
        <begin position="371"/>
        <end position="408"/>
    </location>
</feature>
<feature type="region of interest" description="Disordered" evidence="3">
    <location>
        <begin position="469"/>
        <end position="490"/>
    </location>
</feature>
<feature type="region of interest" description="Disordered" evidence="3">
    <location>
        <begin position="576"/>
        <end position="603"/>
    </location>
</feature>
<feature type="short sequence motif" description="SH2-binding; to LCP2" evidence="1">
    <location>
        <begin position="520"/>
        <end position="523"/>
    </location>
</feature>
<feature type="compositionally biased region" description="Polar residues" evidence="3">
    <location>
        <begin position="69"/>
        <end position="81"/>
    </location>
</feature>
<feature type="compositionally biased region" description="Polar residues" evidence="3">
    <location>
        <begin position="89"/>
        <end position="99"/>
    </location>
</feature>
<feature type="compositionally biased region" description="Polar residues" evidence="3">
    <location>
        <begin position="190"/>
        <end position="216"/>
    </location>
</feature>
<feature type="compositionally biased region" description="Polar residues" evidence="3">
    <location>
        <begin position="226"/>
        <end position="240"/>
    </location>
</feature>
<feature type="compositionally biased region" description="Pro residues" evidence="3">
    <location>
        <begin position="275"/>
        <end position="284"/>
    </location>
</feature>
<feature type="compositionally biased region" description="Basic and acidic residues" evidence="3">
    <location>
        <begin position="374"/>
        <end position="402"/>
    </location>
</feature>
<feature type="compositionally biased region" description="Low complexity" evidence="3">
    <location>
        <begin position="473"/>
        <end position="485"/>
    </location>
</feature>
<feature type="compositionally biased region" description="Acidic residues" evidence="3">
    <location>
        <begin position="584"/>
        <end position="593"/>
    </location>
</feature>
<feature type="compositionally biased region" description="Basic and acidic residues" evidence="3">
    <location>
        <begin position="594"/>
        <end position="603"/>
    </location>
</feature>
<feature type="modified residue" description="Phosphotyrosine" evidence="1">
    <location>
        <position position="489"/>
    </location>
</feature>
<feature type="modified residue" description="Phosphotyrosine" evidence="1">
    <location>
        <position position="591"/>
    </location>
</feature>
<feature type="sequence conflict" description="In Ref. 1; AK028077." evidence="4" ref="1">
    <original>I</original>
    <variation>V</variation>
    <location>
        <position position="523"/>
    </location>
</feature>
<dbReference type="EMBL" id="AK028077">
    <property type="status" value="NOT_ANNOTATED_CDS"/>
    <property type="molecule type" value="mRNA"/>
</dbReference>
<dbReference type="EMBL" id="AL627186">
    <property type="status" value="NOT_ANNOTATED_CDS"/>
    <property type="molecule type" value="Genomic_DNA"/>
</dbReference>
<dbReference type="EMBL" id="AL929466">
    <property type="status" value="NOT_ANNOTATED_CDS"/>
    <property type="molecule type" value="Genomic_DNA"/>
</dbReference>
<dbReference type="CCDS" id="CCDS51250.2"/>
<dbReference type="RefSeq" id="NP_001156452.2">
    <property type="nucleotide sequence ID" value="NM_001162980.2"/>
</dbReference>
<dbReference type="SMR" id="A2A995"/>
<dbReference type="FunCoup" id="A2A995">
    <property type="interactions" value="326"/>
</dbReference>
<dbReference type="STRING" id="10090.ENSMUSP00000102415"/>
<dbReference type="iPTMnet" id="A2A995"/>
<dbReference type="PhosphoSitePlus" id="A2A995"/>
<dbReference type="jPOST" id="A2A995"/>
<dbReference type="PaxDb" id="10090-ENSMUSP00000102415"/>
<dbReference type="PeptideAtlas" id="A2A995"/>
<dbReference type="ProteomicsDB" id="271620"/>
<dbReference type="Antibodypedia" id="33247">
    <property type="antibodies" value="49 antibodies from 10 providers"/>
</dbReference>
<dbReference type="Ensembl" id="ENSMUST00000106804.2">
    <property type="protein sequence ID" value="ENSMUSP00000102416.2"/>
    <property type="gene ID" value="ENSMUSG00000078612.10"/>
</dbReference>
<dbReference type="GeneID" id="242594"/>
<dbReference type="UCSC" id="uc012dhy.1">
    <property type="organism name" value="mouse"/>
</dbReference>
<dbReference type="AGR" id="MGI:2685466"/>
<dbReference type="MGI" id="MGI:2685466">
    <property type="gene designation" value="Fyb2"/>
</dbReference>
<dbReference type="VEuPathDB" id="HostDB:ENSMUSG00000078612"/>
<dbReference type="eggNOG" id="ENOG502RXZD">
    <property type="taxonomic scope" value="Eukaryota"/>
</dbReference>
<dbReference type="GeneTree" id="ENSGT00530000063460"/>
<dbReference type="HOGENOM" id="CLU_023222_0_0_1"/>
<dbReference type="InParanoid" id="A2A995"/>
<dbReference type="PhylomeDB" id="A2A995"/>
<dbReference type="ChiTaRS" id="Fyb2">
    <property type="organism name" value="mouse"/>
</dbReference>
<dbReference type="PRO" id="PR:A2A995"/>
<dbReference type="Proteomes" id="UP000000589">
    <property type="component" value="Chromosome 4"/>
</dbReference>
<dbReference type="RNAct" id="A2A995">
    <property type="molecule type" value="protein"/>
</dbReference>
<dbReference type="Bgee" id="ENSMUSG00000078612">
    <property type="expression patterns" value="Expressed in animal zygote and 39 other cell types or tissues"/>
</dbReference>
<dbReference type="ExpressionAtlas" id="A2A995">
    <property type="expression patterns" value="baseline and differential"/>
</dbReference>
<dbReference type="GO" id="GO:0001772">
    <property type="term" value="C:immunological synapse"/>
    <property type="evidence" value="ECO:0000250"/>
    <property type="project" value="UniProtKB"/>
</dbReference>
<dbReference type="GO" id="GO:0045121">
    <property type="term" value="C:membrane raft"/>
    <property type="evidence" value="ECO:0000250"/>
    <property type="project" value="UniProtKB"/>
</dbReference>
<dbReference type="GO" id="GO:0033627">
    <property type="term" value="P:cell adhesion mediated by integrin"/>
    <property type="evidence" value="ECO:0000250"/>
    <property type="project" value="UniProtKB"/>
</dbReference>
<dbReference type="GO" id="GO:0007229">
    <property type="term" value="P:integrin-mediated signaling pathway"/>
    <property type="evidence" value="ECO:0007669"/>
    <property type="project" value="InterPro"/>
</dbReference>
<dbReference type="GO" id="GO:0050852">
    <property type="term" value="P:T cell receptor signaling pathway"/>
    <property type="evidence" value="ECO:0000250"/>
    <property type="project" value="UniProtKB"/>
</dbReference>
<dbReference type="FunFam" id="2.30.30.40:FF:000220">
    <property type="entry name" value="FYN binding protein 2"/>
    <property type="match status" value="1"/>
</dbReference>
<dbReference type="Gene3D" id="2.30.30.40">
    <property type="entry name" value="SH3 Domains"/>
    <property type="match status" value="1"/>
</dbReference>
<dbReference type="InterPro" id="IPR043443">
    <property type="entry name" value="FYB1/2-like"/>
</dbReference>
<dbReference type="InterPro" id="IPR029294">
    <property type="entry name" value="hSH3"/>
</dbReference>
<dbReference type="InterPro" id="IPR036028">
    <property type="entry name" value="SH3-like_dom_sf"/>
</dbReference>
<dbReference type="InterPro" id="IPR001452">
    <property type="entry name" value="SH3_domain"/>
</dbReference>
<dbReference type="PANTHER" id="PTHR16830:SF1">
    <property type="entry name" value="FYN-BINDING PROTEIN 2"/>
    <property type="match status" value="1"/>
</dbReference>
<dbReference type="PANTHER" id="PTHR16830">
    <property type="entry name" value="SH2 CONTAINING ADAPTOR PRAM-1 RELATED"/>
    <property type="match status" value="1"/>
</dbReference>
<dbReference type="Pfam" id="PF14603">
    <property type="entry name" value="hSH3"/>
    <property type="match status" value="1"/>
</dbReference>
<dbReference type="SUPFAM" id="SSF50044">
    <property type="entry name" value="SH3-domain"/>
    <property type="match status" value="1"/>
</dbReference>
<dbReference type="PROSITE" id="PS50002">
    <property type="entry name" value="SH3"/>
    <property type="match status" value="1"/>
</dbReference>
<gene>
    <name evidence="5" type="primary">Fyb2</name>
    <name type="synonym">ARAP</name>
</gene>
<comment type="function">
    <text evidence="1">Adapter protein that plays a role in T-cell receptor (TCR)-mediated activation of signaling pathways. Required for T-cell activation and integrin-mediated T-cell adhesion in response to TCR stimulation.</text>
</comment>
<comment type="subunit">
    <text evidence="1">Interacts with SKAP1, LCK and FYN. The phosphorylated form interacts with LCP2.</text>
</comment>
<comment type="subcellular location">
    <subcellularLocation>
        <location evidence="1">Membrane raft</location>
    </subcellularLocation>
    <text evidence="1">Recruited to membrane rafts and immunological synapse after TCR stimulation.</text>
</comment>
<comment type="PTM">
    <text evidence="1">Phosphorylation is required for its function in T-cell activation.</text>
</comment>
<reference key="1">
    <citation type="journal article" date="2005" name="Science">
        <title>The transcriptional landscape of the mammalian genome.</title>
        <authorList>
            <person name="Carninci P."/>
            <person name="Kasukawa T."/>
            <person name="Katayama S."/>
            <person name="Gough J."/>
            <person name="Frith M.C."/>
            <person name="Maeda N."/>
            <person name="Oyama R."/>
            <person name="Ravasi T."/>
            <person name="Lenhard B."/>
            <person name="Wells C."/>
            <person name="Kodzius R."/>
            <person name="Shimokawa K."/>
            <person name="Bajic V.B."/>
            <person name="Brenner S.E."/>
            <person name="Batalov S."/>
            <person name="Forrest A.R."/>
            <person name="Zavolan M."/>
            <person name="Davis M.J."/>
            <person name="Wilming L.G."/>
            <person name="Aidinis V."/>
            <person name="Allen J.E."/>
            <person name="Ambesi-Impiombato A."/>
            <person name="Apweiler R."/>
            <person name="Aturaliya R.N."/>
            <person name="Bailey T.L."/>
            <person name="Bansal M."/>
            <person name="Baxter L."/>
            <person name="Beisel K.W."/>
            <person name="Bersano T."/>
            <person name="Bono H."/>
            <person name="Chalk A.M."/>
            <person name="Chiu K.P."/>
            <person name="Choudhary V."/>
            <person name="Christoffels A."/>
            <person name="Clutterbuck D.R."/>
            <person name="Crowe M.L."/>
            <person name="Dalla E."/>
            <person name="Dalrymple B.P."/>
            <person name="de Bono B."/>
            <person name="Della Gatta G."/>
            <person name="di Bernardo D."/>
            <person name="Down T."/>
            <person name="Engstrom P."/>
            <person name="Fagiolini M."/>
            <person name="Faulkner G."/>
            <person name="Fletcher C.F."/>
            <person name="Fukushima T."/>
            <person name="Furuno M."/>
            <person name="Futaki S."/>
            <person name="Gariboldi M."/>
            <person name="Georgii-Hemming P."/>
            <person name="Gingeras T.R."/>
            <person name="Gojobori T."/>
            <person name="Green R.E."/>
            <person name="Gustincich S."/>
            <person name="Harbers M."/>
            <person name="Hayashi Y."/>
            <person name="Hensch T.K."/>
            <person name="Hirokawa N."/>
            <person name="Hill D."/>
            <person name="Huminiecki L."/>
            <person name="Iacono M."/>
            <person name="Ikeo K."/>
            <person name="Iwama A."/>
            <person name="Ishikawa T."/>
            <person name="Jakt M."/>
            <person name="Kanapin A."/>
            <person name="Katoh M."/>
            <person name="Kawasawa Y."/>
            <person name="Kelso J."/>
            <person name="Kitamura H."/>
            <person name="Kitano H."/>
            <person name="Kollias G."/>
            <person name="Krishnan S.P."/>
            <person name="Kruger A."/>
            <person name="Kummerfeld S.K."/>
            <person name="Kurochkin I.V."/>
            <person name="Lareau L.F."/>
            <person name="Lazarevic D."/>
            <person name="Lipovich L."/>
            <person name="Liu J."/>
            <person name="Liuni S."/>
            <person name="McWilliam S."/>
            <person name="Madan Babu M."/>
            <person name="Madera M."/>
            <person name="Marchionni L."/>
            <person name="Matsuda H."/>
            <person name="Matsuzawa S."/>
            <person name="Miki H."/>
            <person name="Mignone F."/>
            <person name="Miyake S."/>
            <person name="Morris K."/>
            <person name="Mottagui-Tabar S."/>
            <person name="Mulder N."/>
            <person name="Nakano N."/>
            <person name="Nakauchi H."/>
            <person name="Ng P."/>
            <person name="Nilsson R."/>
            <person name="Nishiguchi S."/>
            <person name="Nishikawa S."/>
            <person name="Nori F."/>
            <person name="Ohara O."/>
            <person name="Okazaki Y."/>
            <person name="Orlando V."/>
            <person name="Pang K.C."/>
            <person name="Pavan W.J."/>
            <person name="Pavesi G."/>
            <person name="Pesole G."/>
            <person name="Petrovsky N."/>
            <person name="Piazza S."/>
            <person name="Reed J."/>
            <person name="Reid J.F."/>
            <person name="Ring B.Z."/>
            <person name="Ringwald M."/>
            <person name="Rost B."/>
            <person name="Ruan Y."/>
            <person name="Salzberg S.L."/>
            <person name="Sandelin A."/>
            <person name="Schneider C."/>
            <person name="Schoenbach C."/>
            <person name="Sekiguchi K."/>
            <person name="Semple C.A."/>
            <person name="Seno S."/>
            <person name="Sessa L."/>
            <person name="Sheng Y."/>
            <person name="Shibata Y."/>
            <person name="Shimada H."/>
            <person name="Shimada K."/>
            <person name="Silva D."/>
            <person name="Sinclair B."/>
            <person name="Sperling S."/>
            <person name="Stupka E."/>
            <person name="Sugiura K."/>
            <person name="Sultana R."/>
            <person name="Takenaka Y."/>
            <person name="Taki K."/>
            <person name="Tammoja K."/>
            <person name="Tan S.L."/>
            <person name="Tang S."/>
            <person name="Taylor M.S."/>
            <person name="Tegner J."/>
            <person name="Teichmann S.A."/>
            <person name="Ueda H.R."/>
            <person name="van Nimwegen E."/>
            <person name="Verardo R."/>
            <person name="Wei C.L."/>
            <person name="Yagi K."/>
            <person name="Yamanishi H."/>
            <person name="Zabarovsky E."/>
            <person name="Zhu S."/>
            <person name="Zimmer A."/>
            <person name="Hide W."/>
            <person name="Bult C."/>
            <person name="Grimmond S.M."/>
            <person name="Teasdale R.D."/>
            <person name="Liu E.T."/>
            <person name="Brusic V."/>
            <person name="Quackenbush J."/>
            <person name="Wahlestedt C."/>
            <person name="Mattick J.S."/>
            <person name="Hume D.A."/>
            <person name="Kai C."/>
            <person name="Sasaki D."/>
            <person name="Tomaru Y."/>
            <person name="Fukuda S."/>
            <person name="Kanamori-Katayama M."/>
            <person name="Suzuki M."/>
            <person name="Aoki J."/>
            <person name="Arakawa T."/>
            <person name="Iida J."/>
            <person name="Imamura K."/>
            <person name="Itoh M."/>
            <person name="Kato T."/>
            <person name="Kawaji H."/>
            <person name="Kawagashira N."/>
            <person name="Kawashima T."/>
            <person name="Kojima M."/>
            <person name="Kondo S."/>
            <person name="Konno H."/>
            <person name="Nakano K."/>
            <person name="Ninomiya N."/>
            <person name="Nishio T."/>
            <person name="Okada M."/>
            <person name="Plessy C."/>
            <person name="Shibata K."/>
            <person name="Shiraki T."/>
            <person name="Suzuki S."/>
            <person name="Tagami M."/>
            <person name="Waki K."/>
            <person name="Watahiki A."/>
            <person name="Okamura-Oho Y."/>
            <person name="Suzuki H."/>
            <person name="Kawai J."/>
            <person name="Hayashizaki Y."/>
        </authorList>
    </citation>
    <scope>NUCLEOTIDE SEQUENCE [LARGE SCALE MRNA]</scope>
    <source>
        <tissue>Testis</tissue>
    </source>
</reference>
<reference key="2">
    <citation type="journal article" date="2009" name="PLoS Biol.">
        <title>Lineage-specific biology revealed by a finished genome assembly of the mouse.</title>
        <authorList>
            <person name="Church D.M."/>
            <person name="Goodstadt L."/>
            <person name="Hillier L.W."/>
            <person name="Zody M.C."/>
            <person name="Goldstein S."/>
            <person name="She X."/>
            <person name="Bult C.J."/>
            <person name="Agarwala R."/>
            <person name="Cherry J.L."/>
            <person name="DiCuccio M."/>
            <person name="Hlavina W."/>
            <person name="Kapustin Y."/>
            <person name="Meric P."/>
            <person name="Maglott D."/>
            <person name="Birtle Z."/>
            <person name="Marques A.C."/>
            <person name="Graves T."/>
            <person name="Zhou S."/>
            <person name="Teague B."/>
            <person name="Potamousis K."/>
            <person name="Churas C."/>
            <person name="Place M."/>
            <person name="Herschleb J."/>
            <person name="Runnheim R."/>
            <person name="Forrest D."/>
            <person name="Amos-Landgraf J."/>
            <person name="Schwartz D.C."/>
            <person name="Cheng Z."/>
            <person name="Lindblad-Toh K."/>
            <person name="Eichler E.E."/>
            <person name="Ponting C.P."/>
        </authorList>
    </citation>
    <scope>NUCLEOTIDE SEQUENCE [LARGE SCALE GENOMIC DNA]</scope>
    <source>
        <strain>C57BL/6J</strain>
    </source>
</reference>
<reference key="3">
    <citation type="journal article" date="2007" name="Proc. Natl. Acad. Sci. U.S.A.">
        <title>Large-scale phosphorylation analysis of mouse liver.</title>
        <authorList>
            <person name="Villen J."/>
            <person name="Beausoleil S.A."/>
            <person name="Gerber S.A."/>
            <person name="Gygi S.P."/>
        </authorList>
    </citation>
    <scope>IDENTIFICATION BY MASS SPECTROMETRY [LARGE SCALE ANALYSIS]</scope>
    <source>
        <tissue>Liver</tissue>
    </source>
</reference>
<protein>
    <recommendedName>
        <fullName evidence="5">FYN-binding protein 2</fullName>
    </recommendedName>
    <alternativeName>
        <fullName>Activation-dependent, raft-recruited ADAP-like phosphoprotein</fullName>
    </alternativeName>
</protein>
<organism>
    <name type="scientific">Mus musculus</name>
    <name type="common">Mouse</name>
    <dbReference type="NCBI Taxonomy" id="10090"/>
    <lineage>
        <taxon>Eukaryota</taxon>
        <taxon>Metazoa</taxon>
        <taxon>Chordata</taxon>
        <taxon>Craniata</taxon>
        <taxon>Vertebrata</taxon>
        <taxon>Euteleostomi</taxon>
        <taxon>Mammalia</taxon>
        <taxon>Eutheria</taxon>
        <taxon>Euarchontoglires</taxon>
        <taxon>Glires</taxon>
        <taxon>Rodentia</taxon>
        <taxon>Myomorpha</taxon>
        <taxon>Muroidea</taxon>
        <taxon>Muridae</taxon>
        <taxon>Murinae</taxon>
        <taxon>Mus</taxon>
        <taxon>Mus</taxon>
    </lineage>
</organism>